<proteinExistence type="inferred from homology"/>
<gene>
    <name type="primary">APOE</name>
</gene>
<sequence>MKVLWAVLVVTLLAGCRADAEPELEAQEPAVWQSGQPWELALGRLWDYLRWVQTLSDQVQEELLSSQVTQELTLLMEDTMKEVKAYKAELEQELAPMAEDTRARLSKELQAAQARLGADMEEVRNRLAQYRGEVQAMLGQSAEELRARLASHLRKMRKRLLRDAEDLQKRLAVYKAGAREGAERGVSAIRERLASLVEQGRLRSALTSQPLRERAQAWGERLRGRLEEVGGQARDRLDVVREQMEEVRAKVEEQAEAFQARLKGWFEPMVEDMRRQWADLIEKVQVAVGASTPAPSQKP</sequence>
<protein>
    <recommendedName>
        <fullName>Apolipoprotein E</fullName>
        <shortName>Apo-E</shortName>
    </recommendedName>
</protein>
<comment type="function">
    <text evidence="1">APOE is an apolipoprotein, a protein associating with lipid particles, that mainly functions in lipoprotein-mediated lipid transport between organs via the plasma and interstitial fluids. APOE is a core component of plasma lipoproteins and is involved in their production, conversion and clearance. Apolipoproteins are amphipathic molecules that interact both with lipids of the lipoprotein particle core and the aqueous environment of the plasma. As such, APOE associates with chylomicrons, chylomicron remnants, very low density lipoproteins (VLDL) and intermediate density lipoproteins (IDL) but shows a preferential binding to high-density lipoproteins (HDL). It also binds a wide range of cellular receptors including the LDL receptor/LDLR, the LDL receptor-related proteins LRP1, LRP2 and LRP8 and the very low-density lipoprotein receptor/VLDLR that mediate the cellular uptake of the APOE-containing lipoprotein particles. Finally, APOE also has a heparin-binding activity and binds heparan-sulfate proteoglycans on the surface of cells, a property that supports the capture and the receptor-mediated uptake of APOE-containing lipoproteins by cells. A main function of APOE is to mediate lipoprotein clearance through the uptake of chylomicrons, VLDLs, and HDLs by hepatocytes. APOE is also involved in the biosynthesis by the liver of VLDLs as well as their uptake by peripheral tissues ensuring the delivery of triglycerides and energy storage in muscle, heart and adipose tissues. By participating in the lipoprotein-mediated distribution of lipids among tissues, APOE plays a critical role in plasma and tissues lipid homeostasis. APOE is also involved in two steps of reverse cholesterol transport, the HDLs-mediated transport of cholesterol from peripheral tissues to the liver, and thereby plays an important role in cholesterol homeostasis. First, it is functionally associated with ABCA1 in the biogenesis of HDLs in tissues. Second, it is enriched in circulating HDLs and mediates their uptake by hepatocytes. APOE also plays an important role in lipid transport in the central nervous system, regulating neuron survival and sprouting.</text>
</comment>
<comment type="subunit">
    <text evidence="1">Homotetramer. May interact with ABCA1; functionally associated with ABCA1 in the biogenesis of HDLs. May interact with APP/A4 amyloid-beta peptide; the interaction is extremely stable in vitro but its physiological significance is unclear. May interact with MAPT. May interact with MAP2. In the cerebrospinal fluid, interacts with secreted SORL1. Interacts with PMEL; this allows the loading of PMEL luminal fragment on ILVs to induce fibril nucleation.</text>
</comment>
<comment type="subcellular location">
    <subcellularLocation>
        <location evidence="1">Secreted</location>
    </subcellularLocation>
    <subcellularLocation>
        <location evidence="1">Secreted</location>
        <location evidence="1">Extracellular space</location>
    </subcellularLocation>
    <subcellularLocation>
        <location evidence="1">Secreted</location>
        <location evidence="1">Extracellular space</location>
        <location evidence="1">Extracellular matrix</location>
    </subcellularLocation>
    <subcellularLocation>
        <location evidence="1">Extracellular vesicle</location>
    </subcellularLocation>
    <subcellularLocation>
        <location evidence="1">Endosome</location>
        <location evidence="1">Multivesicular body</location>
    </subcellularLocation>
    <text evidence="1">In the plasma, APOE is associated with chylomicrons, chylomicrons remnants, VLDL, LDL and HDL lipoproteins. Lipid poor oligomeric APOE is associated with the extracellular matrix in a calcium- and heparan-sulfate proteoglycans-dependent manner. Lipidation induces the release from the extracellular matrix. Colocalizes with CD63 and PMEL at exosomes and in intraluminal vesicles within multivesicular endosomes.</text>
</comment>
<comment type="PTM">
    <text evidence="1">APOE exists as multiple glycosylated and sialylated glycoforms within cells and in plasma. The extent of glycosylation and sialylation are tissue and context specific.</text>
</comment>
<comment type="PTM">
    <text evidence="1">Glycated in plasma VLDL.</text>
</comment>
<comment type="PTM">
    <text evidence="1">Phosphorylated by FAM20C in the extracellular medium.</text>
</comment>
<comment type="similarity">
    <text evidence="4">Belongs to the apolipoprotein A1/A4/E family.</text>
</comment>
<organism>
    <name type="scientific">Erethizon dorsatum</name>
    <name type="common">North American porcupine</name>
    <name type="synonym">Hystrix dorsata</name>
    <dbReference type="NCBI Taxonomy" id="34844"/>
    <lineage>
        <taxon>Eukaryota</taxon>
        <taxon>Metazoa</taxon>
        <taxon>Chordata</taxon>
        <taxon>Craniata</taxon>
        <taxon>Vertebrata</taxon>
        <taxon>Euteleostomi</taxon>
        <taxon>Mammalia</taxon>
        <taxon>Eutheria</taxon>
        <taxon>Euarchontoglires</taxon>
        <taxon>Glires</taxon>
        <taxon>Rodentia</taxon>
        <taxon>Hystricomorpha</taxon>
        <taxon>Erethizontidae</taxon>
        <taxon>Erethizon</taxon>
    </lineage>
</organism>
<evidence type="ECO:0000250" key="1">
    <source>
        <dbReference type="UniProtKB" id="P02649"/>
    </source>
</evidence>
<evidence type="ECO:0000250" key="2">
    <source>
        <dbReference type="UniProtKB" id="P08226"/>
    </source>
</evidence>
<evidence type="ECO:0000255" key="3"/>
<evidence type="ECO:0000305" key="4"/>
<reference key="1">
    <citation type="submission" date="2019-04" db="EMBL/GenBank/DDBJ databases">
        <title>The genome of the North American Porcupine (Erethizon dorsatum).</title>
        <authorList>
            <person name="Kirk H."/>
            <person name="Pandoh P."/>
            <person name="Troussard A."/>
            <person name="Zhao Y."/>
            <person name="Mungall A."/>
            <person name="Moore R."/>
            <person name="Sinclair-Smith T."/>
            <person name="Desprez I."/>
            <person name="Parker D."/>
            <person name="Marra M.A."/>
            <person name="Jones S.J.M."/>
        </authorList>
    </citation>
    <scope>NUCLEOTIDE SEQUENCE [LARGE SCALE GENOMIC DNA]</scope>
    <source>
        <tissue>Blood</tissue>
    </source>
</reference>
<reference key="2">
    <citation type="unpublished observations" date="2021-07">
        <authorList>
            <person name="Puppione D.L."/>
        </authorList>
    </citation>
    <scope>IDENTIFICATION</scope>
</reference>
<accession>P0DUY8</accession>
<dbReference type="EMBL" id="SWEC01025652">
    <property type="status" value="NOT_ANNOTATED_CDS"/>
    <property type="molecule type" value="Genomic_DNA"/>
</dbReference>
<dbReference type="SMR" id="P0DUY8"/>
<dbReference type="GO" id="GO:0042627">
    <property type="term" value="C:chylomicron"/>
    <property type="evidence" value="ECO:0007669"/>
    <property type="project" value="UniProtKB-KW"/>
</dbReference>
<dbReference type="GO" id="GO:0070062">
    <property type="term" value="C:extracellular exosome"/>
    <property type="evidence" value="ECO:0000250"/>
    <property type="project" value="UniProtKB"/>
</dbReference>
<dbReference type="GO" id="GO:0034364">
    <property type="term" value="C:high-density lipoprotein particle"/>
    <property type="evidence" value="ECO:0007669"/>
    <property type="project" value="UniProtKB-KW"/>
</dbReference>
<dbReference type="GO" id="GO:0034362">
    <property type="term" value="C:low-density lipoprotein particle"/>
    <property type="evidence" value="ECO:0007669"/>
    <property type="project" value="TreeGrafter"/>
</dbReference>
<dbReference type="GO" id="GO:0097487">
    <property type="term" value="C:multivesicular body, internal vesicle"/>
    <property type="evidence" value="ECO:0000250"/>
    <property type="project" value="UniProtKB"/>
</dbReference>
<dbReference type="GO" id="GO:0034361">
    <property type="term" value="C:very-low-density lipoprotein particle"/>
    <property type="evidence" value="ECO:0007669"/>
    <property type="project" value="UniProtKB-KW"/>
</dbReference>
<dbReference type="GO" id="GO:0120020">
    <property type="term" value="F:cholesterol transfer activity"/>
    <property type="evidence" value="ECO:0007669"/>
    <property type="project" value="TreeGrafter"/>
</dbReference>
<dbReference type="GO" id="GO:0008201">
    <property type="term" value="F:heparin binding"/>
    <property type="evidence" value="ECO:0007669"/>
    <property type="project" value="UniProtKB-KW"/>
</dbReference>
<dbReference type="GO" id="GO:0060228">
    <property type="term" value="F:phosphatidylcholine-sterol O-acyltransferase activator activity"/>
    <property type="evidence" value="ECO:0007669"/>
    <property type="project" value="TreeGrafter"/>
</dbReference>
<dbReference type="GO" id="GO:0005543">
    <property type="term" value="F:phospholipid binding"/>
    <property type="evidence" value="ECO:0007669"/>
    <property type="project" value="TreeGrafter"/>
</dbReference>
<dbReference type="GO" id="GO:0055090">
    <property type="term" value="P:acylglycerol homeostasis"/>
    <property type="evidence" value="ECO:0007669"/>
    <property type="project" value="TreeGrafter"/>
</dbReference>
<dbReference type="GO" id="GO:0033344">
    <property type="term" value="P:cholesterol efflux"/>
    <property type="evidence" value="ECO:0007669"/>
    <property type="project" value="TreeGrafter"/>
</dbReference>
<dbReference type="GO" id="GO:0008203">
    <property type="term" value="P:cholesterol metabolic process"/>
    <property type="evidence" value="ECO:0007669"/>
    <property type="project" value="TreeGrafter"/>
</dbReference>
<dbReference type="GO" id="GO:0042157">
    <property type="term" value="P:lipoprotein metabolic process"/>
    <property type="evidence" value="ECO:0007669"/>
    <property type="project" value="InterPro"/>
</dbReference>
<dbReference type="GO" id="GO:0032438">
    <property type="term" value="P:melanosome organization"/>
    <property type="evidence" value="ECO:0000250"/>
    <property type="project" value="UniProtKB"/>
</dbReference>
<dbReference type="GO" id="GO:0033700">
    <property type="term" value="P:phospholipid efflux"/>
    <property type="evidence" value="ECO:0007669"/>
    <property type="project" value="TreeGrafter"/>
</dbReference>
<dbReference type="FunFam" id="1.20.120.20:FF:000002">
    <property type="entry name" value="Apolipoprotein E"/>
    <property type="match status" value="1"/>
</dbReference>
<dbReference type="FunFam" id="1.20.120.20:FF:000003">
    <property type="entry name" value="Apolipoprotein E"/>
    <property type="match status" value="1"/>
</dbReference>
<dbReference type="Gene3D" id="1.20.120.20">
    <property type="entry name" value="Apolipoprotein"/>
    <property type="match status" value="2"/>
</dbReference>
<dbReference type="InterPro" id="IPR000074">
    <property type="entry name" value="ApoA_E"/>
</dbReference>
<dbReference type="InterPro" id="IPR050163">
    <property type="entry name" value="Apolipoprotein_A1/A4/E"/>
</dbReference>
<dbReference type="PANTHER" id="PTHR18976">
    <property type="entry name" value="APOLIPOPROTEIN"/>
    <property type="match status" value="1"/>
</dbReference>
<dbReference type="PANTHER" id="PTHR18976:SF2">
    <property type="entry name" value="APOLIPOPROTEIN E"/>
    <property type="match status" value="1"/>
</dbReference>
<dbReference type="Pfam" id="PF01442">
    <property type="entry name" value="Apolipoprotein"/>
    <property type="match status" value="1"/>
</dbReference>
<dbReference type="SUPFAM" id="SSF58113">
    <property type="entry name" value="Apolipoprotein A-I"/>
    <property type="match status" value="1"/>
</dbReference>
<name>APOE_EREDO</name>
<feature type="signal peptide" evidence="3">
    <location>
        <begin position="1"/>
        <end position="18"/>
    </location>
</feature>
<feature type="chain" id="PRO_0000454012" description="Apolipoprotein E">
    <location>
        <begin position="19"/>
        <end position="299"/>
    </location>
</feature>
<feature type="repeat" description="1">
    <location>
        <begin position="74"/>
        <end position="95"/>
    </location>
</feature>
<feature type="repeat" description="2">
    <location>
        <begin position="96"/>
        <end position="117"/>
    </location>
</feature>
<feature type="repeat" description="3">
    <location>
        <begin position="118"/>
        <end position="139"/>
    </location>
</feature>
<feature type="repeat" description="4">
    <location>
        <begin position="140"/>
        <end position="161"/>
    </location>
</feature>
<feature type="repeat" description="5">
    <location>
        <begin position="162"/>
        <end position="183"/>
    </location>
</feature>
<feature type="repeat" description="6">
    <location>
        <begin position="184"/>
        <end position="205"/>
    </location>
</feature>
<feature type="repeat" description="8">
    <location>
        <begin position="224"/>
        <end position="245"/>
    </location>
</feature>
<feature type="region of interest" description="8 X 22 AA approximate tandem repeats">
    <location>
        <begin position="74"/>
        <end position="245"/>
    </location>
</feature>
<feature type="region of interest" description="LDL and other lipoprotein receptors binding" evidence="1">
    <location>
        <begin position="152"/>
        <end position="162"/>
    </location>
</feature>
<feature type="region of interest" description="Lipid-binding and lipoprotein association" evidence="1">
    <location>
        <begin position="204"/>
        <end position="273"/>
    </location>
</feature>
<feature type="region of interest" description="Specificity for association with VLDL" evidence="1">
    <location>
        <begin position="261"/>
        <end position="273"/>
    </location>
</feature>
<feature type="binding site" evidence="1">
    <location>
        <begin position="156"/>
        <end position="159"/>
    </location>
    <ligand>
        <name>heparin</name>
        <dbReference type="ChEBI" id="CHEBI:28304"/>
    </ligand>
</feature>
<feature type="binding site" evidence="1">
    <location>
        <begin position="219"/>
        <end position="226"/>
    </location>
    <ligand>
        <name>heparin</name>
        <dbReference type="ChEBI" id="CHEBI:28304"/>
    </ligand>
</feature>
<feature type="modified residue" description="Methionine sulfoxide" evidence="2">
    <location>
        <position position="137"/>
    </location>
</feature>
<feature type="modified residue" description="Phosphoserine" evidence="1">
    <location>
        <position position="141"/>
    </location>
</feature>
<keyword id="KW-0162">Chylomicron</keyword>
<keyword id="KW-0967">Endosome</keyword>
<keyword id="KW-0272">Extracellular matrix</keyword>
<keyword id="KW-0325">Glycoprotein</keyword>
<keyword id="KW-0345">HDL</keyword>
<keyword id="KW-0358">Heparin-binding</keyword>
<keyword id="KW-0445">Lipid transport</keyword>
<keyword id="KW-0446">Lipid-binding</keyword>
<keyword id="KW-0558">Oxidation</keyword>
<keyword id="KW-0597">Phosphoprotein</keyword>
<keyword id="KW-0677">Repeat</keyword>
<keyword id="KW-0964">Secreted</keyword>
<keyword id="KW-0732">Signal</keyword>
<keyword id="KW-0813">Transport</keyword>
<keyword id="KW-0850">VLDL</keyword>